<dbReference type="EMBL" id="AJ406933">
    <property type="protein sequence ID" value="CAC27572.1"/>
    <property type="molecule type" value="mRNA"/>
</dbReference>
<dbReference type="EMBL" id="BC069099">
    <property type="protein sequence ID" value="AAH69099.1"/>
    <property type="molecule type" value="mRNA"/>
</dbReference>
<dbReference type="EMBL" id="BC069448">
    <property type="protein sequence ID" value="AAH69448.1"/>
    <property type="molecule type" value="mRNA"/>
</dbReference>
<dbReference type="EMBL" id="BC093845">
    <property type="protein sequence ID" value="AAH93845.1"/>
    <property type="molecule type" value="mRNA"/>
</dbReference>
<dbReference type="EMBL" id="BC093847">
    <property type="protein sequence ID" value="AAH93847.1"/>
    <property type="molecule type" value="mRNA"/>
</dbReference>
<dbReference type="CCDS" id="CCDS32643.1"/>
<dbReference type="RefSeq" id="NP_149441.1">
    <property type="nucleotide sequence ID" value="NM_033185.3"/>
</dbReference>
<dbReference type="BioGRID" id="124457">
    <property type="interactions" value="82"/>
</dbReference>
<dbReference type="FunCoup" id="Q9BYR6">
    <property type="interactions" value="50"/>
</dbReference>
<dbReference type="IntAct" id="Q9BYR6">
    <property type="interactions" value="74"/>
</dbReference>
<dbReference type="STRING" id="9606.ENSP00000375428"/>
<dbReference type="GlyGen" id="Q9BYR6">
    <property type="glycosylation" value="1 site"/>
</dbReference>
<dbReference type="iPTMnet" id="Q9BYR6"/>
<dbReference type="PhosphoSitePlus" id="Q9BYR6"/>
<dbReference type="BioMuta" id="KRTAP3-3"/>
<dbReference type="DMDM" id="48474631"/>
<dbReference type="MassIVE" id="Q9BYR6"/>
<dbReference type="PaxDb" id="9606-ENSP00000375428"/>
<dbReference type="PeptideAtlas" id="Q9BYR6"/>
<dbReference type="ProteomicsDB" id="79695"/>
<dbReference type="Antibodypedia" id="63700">
    <property type="antibodies" value="40 antibodies from 10 providers"/>
</dbReference>
<dbReference type="DNASU" id="85293"/>
<dbReference type="Ensembl" id="ENST00000391586.3">
    <property type="protein sequence ID" value="ENSP00000375428.1"/>
    <property type="gene ID" value="ENSG00000212899.3"/>
</dbReference>
<dbReference type="Ensembl" id="ENST00000572132.2">
    <property type="protein sequence ID" value="ENSP00000458618.1"/>
    <property type="gene ID" value="ENSG00000263101.2"/>
</dbReference>
<dbReference type="GeneID" id="85293"/>
<dbReference type="KEGG" id="hsa:85293"/>
<dbReference type="MANE-Select" id="ENST00000391586.3">
    <property type="protein sequence ID" value="ENSP00000375428.1"/>
    <property type="RefSeq nucleotide sequence ID" value="NM_033185.3"/>
    <property type="RefSeq protein sequence ID" value="NP_149441.1"/>
</dbReference>
<dbReference type="UCSC" id="uc002hvr.1">
    <property type="organism name" value="human"/>
</dbReference>
<dbReference type="AGR" id="HGNC:18890"/>
<dbReference type="CTD" id="85293"/>
<dbReference type="GeneCards" id="KRTAP3-3"/>
<dbReference type="HGNC" id="HGNC:18890">
    <property type="gene designation" value="KRTAP3-3"/>
</dbReference>
<dbReference type="HPA" id="ENSG00000212899">
    <property type="expression patterns" value="Tissue enriched (skin)"/>
</dbReference>
<dbReference type="neXtProt" id="NX_Q9BYR6"/>
<dbReference type="OpenTargets" id="ENSG00000212899"/>
<dbReference type="PharmGKB" id="PA38742"/>
<dbReference type="VEuPathDB" id="HostDB:ENSG00000212899"/>
<dbReference type="eggNOG" id="KOG4726">
    <property type="taxonomic scope" value="Eukaryota"/>
</dbReference>
<dbReference type="GeneTree" id="ENSGT00390000001157"/>
<dbReference type="HOGENOM" id="CLU_2359185_0_0_1"/>
<dbReference type="InParanoid" id="Q9BYR6"/>
<dbReference type="OMA" id="PCIPRNC"/>
<dbReference type="OrthoDB" id="9522963at2759"/>
<dbReference type="PAN-GO" id="Q9BYR6">
    <property type="GO annotations" value="0 GO annotations based on evolutionary models"/>
</dbReference>
<dbReference type="PhylomeDB" id="Q9BYR6"/>
<dbReference type="TreeFam" id="TF338042"/>
<dbReference type="PathwayCommons" id="Q9BYR6"/>
<dbReference type="Reactome" id="R-HSA-6805567">
    <property type="pathway name" value="Keratinization"/>
</dbReference>
<dbReference type="SignaLink" id="Q9BYR6"/>
<dbReference type="BioGRID-ORCS" id="85293">
    <property type="hits" value="8 hits in 1041 CRISPR screens"/>
</dbReference>
<dbReference type="GenomeRNAi" id="85293"/>
<dbReference type="Pharos" id="Q9BYR6">
    <property type="development level" value="Tdark"/>
</dbReference>
<dbReference type="PRO" id="PR:Q9BYR6"/>
<dbReference type="Proteomes" id="UP000005640">
    <property type="component" value="Chromosome 17"/>
</dbReference>
<dbReference type="RNAct" id="Q9BYR6">
    <property type="molecule type" value="protein"/>
</dbReference>
<dbReference type="Bgee" id="ENSG00000212899">
    <property type="expression patterns" value="Expressed in skin of abdomen and 63 other cell types or tissues"/>
</dbReference>
<dbReference type="GO" id="GO:0005829">
    <property type="term" value="C:cytosol"/>
    <property type="evidence" value="ECO:0000304"/>
    <property type="project" value="Reactome"/>
</dbReference>
<dbReference type="GO" id="GO:0045095">
    <property type="term" value="C:keratin filament"/>
    <property type="evidence" value="ECO:0007669"/>
    <property type="project" value="InterPro"/>
</dbReference>
<dbReference type="GO" id="GO:0005198">
    <property type="term" value="F:structural molecule activity"/>
    <property type="evidence" value="ECO:0007669"/>
    <property type="project" value="InterPro"/>
</dbReference>
<dbReference type="InterPro" id="IPR007659">
    <property type="entry name" value="Keratin_matx"/>
</dbReference>
<dbReference type="PANTHER" id="PTHR23260">
    <property type="entry name" value="KERATIN ASSOCIATED PROTEIN 3-3-RELATED"/>
    <property type="match status" value="1"/>
</dbReference>
<dbReference type="PANTHER" id="PTHR23260:SF1">
    <property type="entry name" value="KERATIN-ASSOCIATED PROTEIN 3-3"/>
    <property type="match status" value="1"/>
</dbReference>
<dbReference type="Pfam" id="PF04579">
    <property type="entry name" value="Keratin_matx"/>
    <property type="match status" value="1"/>
</dbReference>
<sequence>MDCCASRGCSVPTGPATTICSSDKSCRCGVCLPSTCPHTVWLLEPTCCDNCPPPCHIPQPCVPTCFLLNSCQPTPGLETLNLTTFTQPCCEPCLPRGC</sequence>
<accession>Q9BYR6</accession>
<accession>Q52LP0</accession>
<accession>Q6NTD4</accession>
<comment type="function">
    <text>In the hair cortex, hair keratin intermediate filaments are embedded in an interfilamentous matrix, consisting of hair keratin-associated proteins (KRTAP), which are essential for the formation of a rigid and resistant hair shaft through their extensive disulfide bond cross-linking with abundant cysteine residues of hair keratins. The matrix proteins include the high-sulfur and high-glycine-tyrosine keratins.</text>
</comment>
<comment type="subunit">
    <text>Interacts with hair keratins.</text>
</comment>
<comment type="interaction">
    <interactant intactId="EBI-3957694">
        <id>Q9BYR6</id>
    </interactant>
    <interactant intactId="EBI-2558314">
        <id>P43353</id>
        <label>ALDH3B1</label>
    </interactant>
    <organismsDiffer>false</organismsDiffer>
    <experiments>3</experiments>
</comment>
<comment type="interaction">
    <interactant intactId="EBI-3957694">
        <id>Q9BYR6</id>
    </interactant>
    <interactant intactId="EBI-12224467">
        <id>Q9NYG5-2</id>
        <label>ANAPC11</label>
    </interactant>
    <organismsDiffer>false</organismsDiffer>
    <experiments>3</experiments>
</comment>
<comment type="interaction">
    <interactant intactId="EBI-3957694">
        <id>Q9BYR6</id>
    </interactant>
    <interactant intactId="EBI-948603">
        <id>Q03989</id>
        <label>ARID5A</label>
    </interactant>
    <organismsDiffer>false</organismsDiffer>
    <experiments>3</experiments>
</comment>
<comment type="interaction">
    <interactant intactId="EBI-3957694">
        <id>Q9BYR6</id>
    </interactant>
    <interactant intactId="EBI-12006308">
        <id>Q7Z3C6-3</id>
        <label>ATG9A</label>
    </interactant>
    <organismsDiffer>false</organismsDiffer>
    <experiments>3</experiments>
</comment>
<comment type="interaction">
    <interactant intactId="EBI-3957694">
        <id>Q9BYR6</id>
    </interactant>
    <interactant intactId="EBI-745073">
        <id>Q9BXY8</id>
        <label>BEX2</label>
    </interactant>
    <organismsDiffer>false</organismsDiffer>
    <experiments>3</experiments>
</comment>
<comment type="interaction">
    <interactant intactId="EBI-3957694">
        <id>Q9BYR6</id>
    </interactant>
    <interactant intactId="EBI-12139335">
        <id>Q8N6W0</id>
        <label>CELF5</label>
    </interactant>
    <organismsDiffer>false</organismsDiffer>
    <experiments>3</experiments>
</comment>
<comment type="interaction">
    <interactant intactId="EBI-3957694">
        <id>Q9BYR6</id>
    </interactant>
    <interactant intactId="EBI-12261896">
        <id>Q5T4B2</id>
        <label>CERCAM</label>
    </interactant>
    <organismsDiffer>false</organismsDiffer>
    <experiments>3</experiments>
</comment>
<comment type="interaction">
    <interactant intactId="EBI-3957694">
        <id>Q9BYR6</id>
    </interactant>
    <interactant intactId="EBI-12010090">
        <id>A8MYP8</id>
        <label>CIMAP1B</label>
    </interactant>
    <organismsDiffer>false</organismsDiffer>
    <experiments>3</experiments>
</comment>
<comment type="interaction">
    <interactant intactId="EBI-3957694">
        <id>Q9BYR6</id>
    </interactant>
    <interactant intactId="EBI-8636823">
        <id>Q9UBR2</id>
        <label>CTSZ</label>
    </interactant>
    <organismsDiffer>false</organismsDiffer>
    <experiments>3</experiments>
</comment>
<comment type="interaction">
    <interactant intactId="EBI-3957694">
        <id>Q9BYR6</id>
    </interactant>
    <interactant intactId="EBI-3867333">
        <id>A8MQ03</id>
        <label>CYSRT1</label>
    </interactant>
    <organismsDiffer>false</organismsDiffer>
    <experiments>3</experiments>
</comment>
<comment type="interaction">
    <interactant intactId="EBI-3957694">
        <id>Q9BYR6</id>
    </interactant>
    <interactant intactId="EBI-10275670">
        <id>Q8TF63</id>
        <label>DCANP1</label>
    </interactant>
    <organismsDiffer>false</organismsDiffer>
    <experiments>3</experiments>
</comment>
<comment type="interaction">
    <interactant intactId="EBI-3957694">
        <id>Q9BYR6</id>
    </interactant>
    <interactant intactId="EBI-10173222">
        <id>A2VCK2</id>
        <label>DCDC2B</label>
    </interactant>
    <organismsDiffer>false</organismsDiffer>
    <experiments>3</experiments>
</comment>
<comment type="interaction">
    <interactant intactId="EBI-3957694">
        <id>Q9BYR6</id>
    </interactant>
    <interactant intactId="EBI-9679045">
        <id>Q9NQL9</id>
        <label>DMRT3</label>
    </interactant>
    <organismsDiffer>false</organismsDiffer>
    <experiments>3</experiments>
</comment>
<comment type="interaction">
    <interactant intactId="EBI-3957694">
        <id>Q9BYR6</id>
    </interactant>
    <interactant intactId="EBI-448771">
        <id>Q92608</id>
        <label>DOCK2</label>
    </interactant>
    <organismsDiffer>false</organismsDiffer>
    <experiments>3</experiments>
</comment>
<comment type="interaction">
    <interactant intactId="EBI-3957694">
        <id>Q9BYR6</id>
    </interactant>
    <interactant intactId="EBI-13361852">
        <id>Q96PL5</id>
        <label>ERMAP</label>
    </interactant>
    <organismsDiffer>false</organismsDiffer>
    <experiments>3</experiments>
</comment>
<comment type="interaction">
    <interactant intactId="EBI-3957694">
        <id>Q9BYR6</id>
    </interactant>
    <interactant intactId="EBI-3943864">
        <id>Q8N9I5</id>
        <label>FADS6</label>
    </interactant>
    <organismsDiffer>false</organismsDiffer>
    <experiments>3</experiments>
</comment>
<comment type="interaction">
    <interactant intactId="EBI-3957694">
        <id>Q9BYR6</id>
    </interactant>
    <interactant intactId="EBI-11978259">
        <id>Q92567-2</id>
        <label>FAM168A</label>
    </interactant>
    <organismsDiffer>false</organismsDiffer>
    <experiments>3</experiments>
</comment>
<comment type="interaction">
    <interactant intactId="EBI-3957694">
        <id>Q9BYR6</id>
    </interactant>
    <interactant intactId="EBI-2513774">
        <id>O95363</id>
        <label>FARS2</label>
    </interactant>
    <organismsDiffer>false</organismsDiffer>
    <experiments>3</experiments>
</comment>
<comment type="interaction">
    <interactant intactId="EBI-3957694">
        <id>Q9BYR6</id>
    </interactant>
    <interactant intactId="EBI-3956892">
        <id>Q99958</id>
        <label>FOXC2</label>
    </interactant>
    <organismsDiffer>false</organismsDiffer>
    <experiments>3</experiments>
</comment>
<comment type="interaction">
    <interactant intactId="EBI-3957694">
        <id>Q9BYR6</id>
    </interactant>
    <interactant intactId="EBI-1759806">
        <id>O75593</id>
        <label>FOXH1</label>
    </interactant>
    <organismsDiffer>false</organismsDiffer>
    <experiments>3</experiments>
</comment>
<comment type="interaction">
    <interactant intactId="EBI-3957694">
        <id>Q9BYR6</id>
    </interactant>
    <interactant intactId="EBI-983719">
        <id>Q9BZS1</id>
        <label>FOXP3</label>
    </interactant>
    <organismsDiffer>false</organismsDiffer>
    <experiments>3</experiments>
</comment>
<comment type="interaction">
    <interactant intactId="EBI-3957694">
        <id>Q9BYR6</id>
    </interactant>
    <interactant intactId="EBI-11975289">
        <id>Q9Y223-2</id>
        <label>GNE</label>
    </interactant>
    <organismsDiffer>false</organismsDiffer>
    <experiments>3</experiments>
</comment>
<comment type="interaction">
    <interactant intactId="EBI-3957694">
        <id>Q9BYR6</id>
    </interactant>
    <interactant intactId="EBI-713355">
        <id>Q13227</id>
        <label>GPS2</label>
    </interactant>
    <organismsDiffer>false</organismsDiffer>
    <experiments>3</experiments>
</comment>
<comment type="interaction">
    <interactant intactId="EBI-3957694">
        <id>Q9BYR6</id>
    </interactant>
    <interactant intactId="EBI-353467">
        <id>P09211</id>
        <label>GSTP1</label>
    </interactant>
    <organismsDiffer>false</organismsDiffer>
    <experiments>3</experiments>
</comment>
<comment type="interaction">
    <interactant intactId="EBI-3957694">
        <id>Q9BYR6</id>
    </interactant>
    <interactant intactId="EBI-11978177">
        <id>Q96NT3-2</id>
        <label>GUCD1</label>
    </interactant>
    <organismsDiffer>false</organismsDiffer>
    <experiments>3</experiments>
</comment>
<comment type="interaction">
    <interactant intactId="EBI-3957694">
        <id>Q9BYR6</id>
    </interactant>
    <interactant intactId="EBI-740785">
        <id>P49639</id>
        <label>HOXA1</label>
    </interactant>
    <organismsDiffer>false</organismsDiffer>
    <experiments>3</experiments>
</comment>
<comment type="interaction">
    <interactant intactId="EBI-3957694">
        <id>Q9BYR6</id>
    </interactant>
    <interactant intactId="EBI-2880706">
        <id>O43593</id>
        <label>HR</label>
    </interactant>
    <organismsDiffer>false</organismsDiffer>
    <experiments>3</experiments>
</comment>
<comment type="interaction">
    <interactant intactId="EBI-3957694">
        <id>Q9BYR6</id>
    </interactant>
    <interactant intactId="EBI-6426443">
        <id>Q2WGJ6</id>
        <label>KLHL38</label>
    </interactant>
    <organismsDiffer>false</organismsDiffer>
    <experiments>3</experiments>
</comment>
<comment type="interaction">
    <interactant intactId="EBI-3957694">
        <id>Q9BYR6</id>
    </interactant>
    <interactant intactId="EBI-10221390">
        <id>P78385</id>
        <label>KRT83</label>
    </interactant>
    <organismsDiffer>false</organismsDiffer>
    <experiments>5</experiments>
</comment>
<comment type="interaction">
    <interactant intactId="EBI-3957694">
        <id>Q9BYR6</id>
    </interactant>
    <interactant intactId="EBI-11953334">
        <id>P60328</id>
        <label>KRTAP12-3</label>
    </interactant>
    <organismsDiffer>false</organismsDiffer>
    <experiments>3</experiments>
</comment>
<comment type="interaction">
    <interactant intactId="EBI-3957694">
        <id>Q9BYR6</id>
    </interactant>
    <interactant intactId="EBI-10176396">
        <id>P60329</id>
        <label>KRTAP12-4</label>
    </interactant>
    <organismsDiffer>false</organismsDiffer>
    <experiments>3</experiments>
</comment>
<comment type="interaction">
    <interactant intactId="EBI-3957694">
        <id>Q9BYR6</id>
    </interactant>
    <interactant intactId="EBI-11953846">
        <id>Q52LG2</id>
        <label>KRTAP13-2</label>
    </interactant>
    <organismsDiffer>false</organismsDiffer>
    <experiments>3</experiments>
</comment>
<comment type="interaction">
    <interactant intactId="EBI-3957694">
        <id>Q9BYR6</id>
    </interactant>
    <interactant intactId="EBI-11992140">
        <id>Q3LI76</id>
        <label>KRTAP15-1</label>
    </interactant>
    <organismsDiffer>false</organismsDiffer>
    <experiments>3</experiments>
</comment>
<comment type="interaction">
    <interactant intactId="EBI-3957694">
        <id>Q9BYR6</id>
    </interactant>
    <interactant intactId="EBI-12196745">
        <id>Q3LHN2</id>
        <label>KRTAP19-2</label>
    </interactant>
    <organismsDiffer>false</organismsDiffer>
    <experiments>3</experiments>
</comment>
<comment type="interaction">
    <interactant intactId="EBI-3957694">
        <id>Q9BYR6</id>
    </interactant>
    <interactant intactId="EBI-10241353">
        <id>Q3SYF9</id>
        <label>KRTAP19-7</label>
    </interactant>
    <organismsDiffer>false</organismsDiffer>
    <experiments>3</experiments>
</comment>
<comment type="interaction">
    <interactant intactId="EBI-3957694">
        <id>Q9BYR6</id>
    </interactant>
    <interactant intactId="EBI-10302392">
        <id>Q9BYQ6</id>
        <label>KRTAP4-11</label>
    </interactant>
    <organismsDiffer>false</organismsDiffer>
    <experiments>3</experiments>
</comment>
<comment type="interaction">
    <interactant intactId="EBI-3957694">
        <id>Q9BYR6</id>
    </interactant>
    <interactant intactId="EBI-10172511">
        <id>Q9BYR5</id>
        <label>KRTAP4-2</label>
    </interactant>
    <organismsDiffer>false</organismsDiffer>
    <experiments>3</experiments>
</comment>
<comment type="interaction">
    <interactant intactId="EBI-3957694">
        <id>Q9BYR6</id>
    </interactant>
    <interactant intactId="EBI-10250562">
        <id>Q6L8G9</id>
        <label>KRTAP5-6</label>
    </interactant>
    <organismsDiffer>false</organismsDiffer>
    <experiments>3</experiments>
</comment>
<comment type="interaction">
    <interactant intactId="EBI-3957694">
        <id>Q9BYR6</id>
    </interactant>
    <interactant intactId="EBI-11962084">
        <id>Q3LI66</id>
        <label>KRTAP6-2</label>
    </interactant>
    <organismsDiffer>false</organismsDiffer>
    <experiments>3</experiments>
</comment>
<comment type="interaction">
    <interactant intactId="EBI-3957694">
        <id>Q9BYR6</id>
    </interactant>
    <interactant intactId="EBI-1043191">
        <id>Q9BYQ3</id>
        <label>KRTAP9-3</label>
    </interactant>
    <organismsDiffer>false</organismsDiffer>
    <experiments>3</experiments>
</comment>
<comment type="interaction">
    <interactant intactId="EBI-3957694">
        <id>Q9BYR6</id>
    </interactant>
    <interactant intactId="EBI-11958364">
        <id>Q9BYQ0</id>
        <label>KRTAP9-8</label>
    </interactant>
    <organismsDiffer>false</organismsDiffer>
    <experiments>3</experiments>
</comment>
<comment type="interaction">
    <interactant intactId="EBI-3957694">
        <id>Q9BYR6</id>
    </interactant>
    <interactant intactId="EBI-9088686">
        <id>Q14847-2</id>
        <label>LASP1</label>
    </interactant>
    <organismsDiffer>false</organismsDiffer>
    <experiments>3</experiments>
</comment>
<comment type="interaction">
    <interactant intactId="EBI-3957694">
        <id>Q9BYR6</id>
    </interactant>
    <interactant intactId="EBI-11958008">
        <id>Q5T754</id>
        <label>LCE1F</label>
    </interactant>
    <organismsDiffer>false</organismsDiffer>
    <experiments>3</experiments>
</comment>
<comment type="interaction">
    <interactant intactId="EBI-3957694">
        <id>Q9BYR6</id>
    </interactant>
    <interactant intactId="EBI-11478468">
        <id>O14633</id>
        <label>LCE2B</label>
    </interactant>
    <organismsDiffer>false</organismsDiffer>
    <experiments>3</experiments>
</comment>
<comment type="interaction">
    <interactant intactId="EBI-3957694">
        <id>Q9BYR6</id>
    </interactant>
    <interactant intactId="EBI-9394625">
        <id>Q5TA76</id>
        <label>LCE3A</label>
    </interactant>
    <organismsDiffer>false</organismsDiffer>
    <experiments>3</experiments>
</comment>
<comment type="interaction">
    <interactant intactId="EBI-3957694">
        <id>Q9BYR6</id>
    </interactant>
    <interactant intactId="EBI-10245291">
        <id>Q5T5A8</id>
        <label>LCE3C</label>
    </interactant>
    <organismsDiffer>false</organismsDiffer>
    <experiments>3</experiments>
</comment>
<comment type="interaction">
    <interactant intactId="EBI-3957694">
        <id>Q9BYR6</id>
    </interactant>
    <interactant intactId="EBI-6658837">
        <id>Q9BYE3</id>
        <label>LCE3D</label>
    </interactant>
    <organismsDiffer>false</organismsDiffer>
    <experiments>3</experiments>
</comment>
<comment type="interaction">
    <interactant intactId="EBI-3957694">
        <id>Q9BYR6</id>
    </interactant>
    <interactant intactId="EBI-10245456">
        <id>Q5T5B0</id>
        <label>LCE3E</label>
    </interactant>
    <organismsDiffer>false</organismsDiffer>
    <experiments>3</experiments>
</comment>
<comment type="interaction">
    <interactant intactId="EBI-3957694">
        <id>Q9BYR6</id>
    </interactant>
    <interactant intactId="EBI-10246358">
        <id>Q5TA78</id>
        <label>LCE4A</label>
    </interactant>
    <organismsDiffer>false</organismsDiffer>
    <experiments>3</experiments>
</comment>
<comment type="interaction">
    <interactant intactId="EBI-3957694">
        <id>Q9BYR6</id>
    </interactant>
    <interactant intactId="EBI-2341787">
        <id>Q17RB8</id>
        <label>LONRF1</label>
    </interactant>
    <organismsDiffer>false</organismsDiffer>
    <experiments>3</experiments>
</comment>
<comment type="interaction">
    <interactant intactId="EBI-3957694">
        <id>Q9BYR6</id>
    </interactant>
    <interactant intactId="EBI-745046">
        <id>Q8WUT4</id>
        <label>LRRN4</label>
    </interactant>
    <organismsDiffer>false</organismsDiffer>
    <experiments>3</experiments>
</comment>
<comment type="interaction">
    <interactant intactId="EBI-3957694">
        <id>Q9BYR6</id>
    </interactant>
    <interactant intactId="EBI-1046141">
        <id>Q16540</id>
        <label>MRPL23</label>
    </interactant>
    <organismsDiffer>false</organismsDiffer>
    <experiments>3</experiments>
</comment>
<comment type="interaction">
    <interactant intactId="EBI-3957694">
        <id>Q9BYR6</id>
    </interactant>
    <interactant intactId="EBI-741574">
        <id>Q9BW11</id>
        <label>MXD3</label>
    </interactant>
    <organismsDiffer>false</organismsDiffer>
    <experiments>3</experiments>
</comment>
<comment type="interaction">
    <interactant intactId="EBI-3957694">
        <id>Q9BYR6</id>
    </interactant>
    <interactant intactId="EBI-10250949">
        <id>Q6NSM0</id>
        <label>NR1D2</label>
    </interactant>
    <organismsDiffer>false</organismsDiffer>
    <experiments>3</experiments>
</comment>
<comment type="interaction">
    <interactant intactId="EBI-3957694">
        <id>Q9BYR6</id>
    </interactant>
    <interactant intactId="EBI-741158">
        <id>Q96HA8</id>
        <label>NTAQ1</label>
    </interactant>
    <organismsDiffer>false</organismsDiffer>
    <experiments>3</experiments>
</comment>
<comment type="interaction">
    <interactant intactId="EBI-3957694">
        <id>Q9BYR6</id>
    </interactant>
    <interactant intactId="EBI-1210753">
        <id>Q7Z417</id>
        <label>NUFIP2</label>
    </interactant>
    <organismsDiffer>false</organismsDiffer>
    <experiments>3</experiments>
</comment>
<comment type="interaction">
    <interactant intactId="EBI-3957694">
        <id>Q9BYR6</id>
    </interactant>
    <interactant intactId="EBI-10225049">
        <id>Q7RTU3</id>
        <label>OLIG3</label>
    </interactant>
    <organismsDiffer>false</organismsDiffer>
    <experiments>3</experiments>
</comment>
<comment type="interaction">
    <interactant intactId="EBI-3957694">
        <id>Q9BYR6</id>
    </interactant>
    <interactant intactId="EBI-740446">
        <id>P32242</id>
        <label>OTX1</label>
    </interactant>
    <organismsDiffer>false</organismsDiffer>
    <experiments>6</experiments>
</comment>
<comment type="interaction">
    <interactant intactId="EBI-3957694">
        <id>Q9BYR6</id>
    </interactant>
    <interactant intactId="EBI-10235794">
        <id>Q15077</id>
        <label>P2RY6</label>
    </interactant>
    <organismsDiffer>false</organismsDiffer>
    <experiments>3</experiments>
</comment>
<comment type="interaction">
    <interactant intactId="EBI-3957694">
        <id>Q9BYR6</id>
    </interactant>
    <interactant intactId="EBI-11022007">
        <id>Q9HBE1-4</id>
        <label>PATZ1</label>
    </interactant>
    <organismsDiffer>false</organismsDiffer>
    <experiments>3</experiments>
</comment>
<comment type="interaction">
    <interactant intactId="EBI-3957694">
        <id>Q9BYR6</id>
    </interactant>
    <interactant intactId="EBI-14084211">
        <id>A2BDE7</id>
        <label>PHLDA1</label>
    </interactant>
    <organismsDiffer>false</organismsDiffer>
    <experiments>3</experiments>
</comment>
<comment type="interaction">
    <interactant intactId="EBI-3957694">
        <id>Q9BYR6</id>
    </interactant>
    <interactant intactId="EBI-748265">
        <id>P78337</id>
        <label>PITX1</label>
    </interactant>
    <organismsDiffer>false</organismsDiffer>
    <experiments>3</experiments>
</comment>
<comment type="interaction">
    <interactant intactId="EBI-3957694">
        <id>Q9BYR6</id>
    </interactant>
    <interactant intactId="EBI-12138495">
        <id>Q99697-2</id>
        <label>PITX2</label>
    </interactant>
    <organismsDiffer>false</organismsDiffer>
    <experiments>3</experiments>
</comment>
<comment type="interaction">
    <interactant intactId="EBI-3957694">
        <id>Q9BYR6</id>
    </interactant>
    <interactant intactId="EBI-750734">
        <id>Q9NRY6</id>
        <label>PLSCR3</label>
    </interactant>
    <organismsDiffer>false</organismsDiffer>
    <experiments>3</experiments>
</comment>
<comment type="interaction">
    <interactant intactId="EBI-3957694">
        <id>Q9BYR6</id>
    </interactant>
    <interactant intactId="EBI-769257">
        <id>Q9NRQ2</id>
        <label>PLSCR4</label>
    </interactant>
    <organismsDiffer>false</organismsDiffer>
    <experiments>3</experiments>
</comment>
<comment type="interaction">
    <interactant intactId="EBI-3957694">
        <id>Q9BYR6</id>
    </interactant>
    <interactant intactId="EBI-1053424">
        <id>O43741</id>
        <label>PRKAB2</label>
    </interactant>
    <organismsDiffer>false</organismsDiffer>
    <experiments>3</experiments>
</comment>
<comment type="interaction">
    <interactant intactId="EBI-3957694">
        <id>Q9BYR6</id>
    </interactant>
    <interactant intactId="EBI-3919694">
        <id>P15151</id>
        <label>PVR</label>
    </interactant>
    <organismsDiffer>false</organismsDiffer>
    <experiments>3</experiments>
</comment>
<comment type="interaction">
    <interactant intactId="EBI-3957694">
        <id>Q9BYR6</id>
    </interactant>
    <interactant intactId="EBI-12037847">
        <id>Q6ZSJ9</id>
        <label>SHISA6</label>
    </interactant>
    <organismsDiffer>false</organismsDiffer>
    <experiments>3</experiments>
</comment>
<comment type="interaction">
    <interactant intactId="EBI-3957694">
        <id>Q9BYR6</id>
    </interactant>
    <interactant intactId="EBI-355653">
        <id>Q92922</id>
        <label>SMARCC1</label>
    </interactant>
    <organismsDiffer>false</organismsDiffer>
    <experiments>3</experiments>
</comment>
<comment type="interaction">
    <interactant intactId="EBI-3957694">
        <id>Q9BYR6</id>
    </interactant>
    <interactant intactId="EBI-2851995">
        <id>Q9NP84</id>
        <label>TNFRSF12A</label>
    </interactant>
    <organismsDiffer>false</organismsDiffer>
    <experiments>3</experiments>
</comment>
<comment type="interaction">
    <interactant intactId="EBI-3957694">
        <id>Q9BYR6</id>
    </interactant>
    <interactant intactId="EBI-10191303">
        <id>O95231</id>
        <label>VENTX</label>
    </interactant>
    <organismsDiffer>false</organismsDiffer>
    <experiments>3</experiments>
</comment>
<comment type="interaction">
    <interactant intactId="EBI-3957694">
        <id>Q9BYR6</id>
    </interactant>
    <interactant intactId="EBI-11957216">
        <id>A8MV65-2</id>
        <label>VGLL3</label>
    </interactant>
    <organismsDiffer>false</organismsDiffer>
    <experiments>3</experiments>
</comment>
<comment type="interaction">
    <interactant intactId="EBI-3957694">
        <id>Q9BYR6</id>
    </interactant>
    <interactant intactId="EBI-8832437">
        <id>Q96F45</id>
        <label>ZNF503</label>
    </interactant>
    <organismsDiffer>false</organismsDiffer>
    <experiments>3</experiments>
</comment>
<comment type="tissue specificity">
    <text evidence="1">Localized to the upper cortex of the hair shaft.</text>
</comment>
<comment type="similarity">
    <text evidence="2">Belongs to the KRTAP type 3 family.</text>
</comment>
<reference key="1">
    <citation type="journal article" date="2001" name="J. Biol. Chem.">
        <title>Characterization of a cluster of human high/ultrahigh sulfur keratin-associated protein genes embedded in the type I keratin gene domain on chromosome 17q12-21.</title>
        <authorList>
            <person name="Rogers M.A."/>
            <person name="Langbein L."/>
            <person name="Winter H."/>
            <person name="Ehmann C."/>
            <person name="Praetzel S."/>
            <person name="Korn B."/>
            <person name="Schweizer J."/>
        </authorList>
    </citation>
    <scope>NUCLEOTIDE SEQUENCE [MRNA]</scope>
    <scope>TISSUE SPECIFICITY</scope>
    <source>
        <tissue>Scalp</tissue>
    </source>
</reference>
<reference key="2">
    <citation type="journal article" date="2004" name="Genome Res.">
        <title>The status, quality, and expansion of the NIH full-length cDNA project: the Mammalian Gene Collection (MGC).</title>
        <authorList>
            <consortium name="The MGC Project Team"/>
        </authorList>
    </citation>
    <scope>NUCLEOTIDE SEQUENCE [LARGE SCALE MRNA]</scope>
    <source>
        <tissue>Brain</tissue>
    </source>
</reference>
<gene>
    <name type="primary">KRTAP3-3</name>
    <name type="synonym">KAP3.3</name>
    <name type="synonym">KRTAP3.3</name>
</gene>
<organism>
    <name type="scientific">Homo sapiens</name>
    <name type="common">Human</name>
    <dbReference type="NCBI Taxonomy" id="9606"/>
    <lineage>
        <taxon>Eukaryota</taxon>
        <taxon>Metazoa</taxon>
        <taxon>Chordata</taxon>
        <taxon>Craniata</taxon>
        <taxon>Vertebrata</taxon>
        <taxon>Euteleostomi</taxon>
        <taxon>Mammalia</taxon>
        <taxon>Eutheria</taxon>
        <taxon>Euarchontoglires</taxon>
        <taxon>Primates</taxon>
        <taxon>Haplorrhini</taxon>
        <taxon>Catarrhini</taxon>
        <taxon>Hominidae</taxon>
        <taxon>Homo</taxon>
    </lineage>
</organism>
<keyword id="KW-0416">Keratin</keyword>
<keyword id="KW-1185">Reference proteome</keyword>
<keyword id="KW-0677">Repeat</keyword>
<name>KRA33_HUMAN</name>
<protein>
    <recommendedName>
        <fullName>Keratin-associated protein 3-3</fullName>
    </recommendedName>
    <alternativeName>
        <fullName>High sulfur keratin-associated protein 3.3</fullName>
    </alternativeName>
    <alternativeName>
        <fullName>Keratin-associated protein 3.3</fullName>
    </alternativeName>
</protein>
<evidence type="ECO:0000269" key="1">
    <source>
    </source>
</evidence>
<evidence type="ECO:0000305" key="2"/>
<feature type="chain" id="PRO_0000185167" description="Keratin-associated protein 3-3">
    <location>
        <begin position="1"/>
        <end position="98"/>
    </location>
</feature>
<feature type="repeat" description="1">
    <location>
        <begin position="3"/>
        <end position="7"/>
    </location>
</feature>
<feature type="repeat" description="2">
    <location>
        <begin position="47"/>
        <end position="51"/>
    </location>
</feature>
<feature type="repeat" description="3">
    <location>
        <begin position="89"/>
        <end position="93"/>
    </location>
</feature>
<feature type="region of interest" description="3 X 5 AA repeats of C-C-X(3)">
    <location>
        <begin position="3"/>
        <end position="59"/>
    </location>
</feature>
<feature type="sequence conflict" description="In Ref. 2; AAH69099." evidence="2" ref="2">
    <original>C</original>
    <variation>Y</variation>
    <location>
        <position position="90"/>
    </location>
</feature>
<proteinExistence type="evidence at protein level"/>